<evidence type="ECO:0000250" key="1">
    <source>
        <dbReference type="UniProtKB" id="P40498"/>
    </source>
</evidence>
<evidence type="ECO:0000256" key="2">
    <source>
        <dbReference type="SAM" id="MobiDB-lite"/>
    </source>
</evidence>
<evidence type="ECO:0000269" key="3">
    <source>
    </source>
</evidence>
<evidence type="ECO:0000269" key="4">
    <source>
    </source>
</evidence>
<evidence type="ECO:0000303" key="5">
    <source>
    </source>
</evidence>
<evidence type="ECO:0000305" key="6"/>
<evidence type="ECO:0000312" key="7">
    <source>
        <dbReference type="EMBL" id="AAF99813.1"/>
    </source>
</evidence>
<evidence type="ECO:0000312" key="8">
    <source>
        <dbReference type="EMBL" id="AEE29622.1"/>
    </source>
</evidence>
<sequence>MAPNATGVLKRHRSHEKFDKKRDTKKHKHVEKTIVSNPSTDSPEESSIEAESEAMVYREPTQYQNLLVSLGSSNKVVADMNKRRQREEEGKSDTEEDEDDEDEDEEENSGSDDLSSTDGEDDKSQGDDQETLGGLTDDTQEDNDNQSEEEDPDDYETDEEVHELSTNGQSFVDASSSISAFSEHLSHKLSSEEVETLPKGKWKFKWESPAFDMPNCKWKGTSENFLDGIQSDAPYGLKPKLYNHWLQLYKKCGGKDLDSSKRRKFFSICNSYLDILHSNKKPFYHCGSDEDSSAMDAYLMHSLNHIFKTRDLVKKNESKIAKHRETSEEEILSDDGFLDQGFTRPKVLILLPLRSIAFRVVKRLIQLTPESQRVNVEHLDRFNDEFGCEEDTDDCDGEKTTSKNGNSIKQKSSKPSDWQALFGANNNDDEFMLGIKHTRKSIRLYGDFYSSDIIVASPLKLHMAIGAAEENKERDVDYLSSIEVLVIDHADIISMQNWSFLATVVDYLNRLPTKQHGTNVMRIRPLYLDGHARFYRQSIILSSYLTPEMNSLFGRHCLNYKGKMKMACEYKGVLEKVLLPVRQIYERFDAASITQVDDARLEYFTKKIFPKIKDSVQGGVMIFIHSYFEFVRLRNFLNTQNTSFCLLGDYAKNADISRAREQFFVGSRKIMLYTERAYFYKRYKIRGIKNLILYSLPERKEFYPEIMNMLEEGSHDMMSTALFSRFDMLQLERIVGSTSAKRMITSEKNMFAFC</sequence>
<feature type="chain" id="PRO_0000454728" description="Protein NUCLEOLAR FACTOR 1">
    <location>
        <begin position="1"/>
        <end position="754"/>
    </location>
</feature>
<feature type="region of interest" description="Disordered" evidence="2">
    <location>
        <begin position="1"/>
        <end position="56"/>
    </location>
</feature>
<feature type="region of interest" description="Disordered" evidence="2">
    <location>
        <begin position="69"/>
        <end position="166"/>
    </location>
</feature>
<feature type="region of interest" description="Disordered" evidence="2">
    <location>
        <begin position="390"/>
        <end position="413"/>
    </location>
</feature>
<feature type="compositionally biased region" description="Acidic residues" evidence="2">
    <location>
        <begin position="42"/>
        <end position="52"/>
    </location>
</feature>
<feature type="compositionally biased region" description="Basic and acidic residues" evidence="2">
    <location>
        <begin position="80"/>
        <end position="93"/>
    </location>
</feature>
<feature type="compositionally biased region" description="Acidic residues" evidence="2">
    <location>
        <begin position="94"/>
        <end position="110"/>
    </location>
</feature>
<feature type="compositionally biased region" description="Acidic residues" evidence="2">
    <location>
        <begin position="138"/>
        <end position="161"/>
    </location>
</feature>
<feature type="compositionally biased region" description="Polar residues" evidence="2">
    <location>
        <begin position="402"/>
        <end position="413"/>
    </location>
</feature>
<feature type="sequence conflict" description="In Ref. 3; AAL07149." evidence="6" ref="3">
    <original>E</original>
    <variation>G</variation>
    <location>
        <position position="732"/>
    </location>
</feature>
<organism>
    <name type="scientific">Arabidopsis thaliana</name>
    <name type="common">Mouse-ear cress</name>
    <dbReference type="NCBI Taxonomy" id="3702"/>
    <lineage>
        <taxon>Eukaryota</taxon>
        <taxon>Viridiplantae</taxon>
        <taxon>Streptophyta</taxon>
        <taxon>Embryophyta</taxon>
        <taxon>Tracheophyta</taxon>
        <taxon>Spermatophyta</taxon>
        <taxon>Magnoliopsida</taxon>
        <taxon>eudicotyledons</taxon>
        <taxon>Gunneridae</taxon>
        <taxon>Pentapetalae</taxon>
        <taxon>rosids</taxon>
        <taxon>malvids</taxon>
        <taxon>Brassicales</taxon>
        <taxon>Brassicaceae</taxon>
        <taxon>Camelineae</taxon>
        <taxon>Arabidopsis</taxon>
    </lineage>
</organism>
<protein>
    <recommendedName>
        <fullName evidence="5">Protein NUCLEOLAR FACTOR 1</fullName>
    </recommendedName>
</protein>
<reference key="1">
    <citation type="journal article" date="2000" name="Nature">
        <title>Sequence and analysis of chromosome 1 of the plant Arabidopsis thaliana.</title>
        <authorList>
            <person name="Theologis A."/>
            <person name="Ecker J.R."/>
            <person name="Palm C.J."/>
            <person name="Federspiel N.A."/>
            <person name="Kaul S."/>
            <person name="White O."/>
            <person name="Alonso J."/>
            <person name="Altafi H."/>
            <person name="Araujo R."/>
            <person name="Bowman C.L."/>
            <person name="Brooks S.Y."/>
            <person name="Buehler E."/>
            <person name="Chan A."/>
            <person name="Chao Q."/>
            <person name="Chen H."/>
            <person name="Cheuk R.F."/>
            <person name="Chin C.W."/>
            <person name="Chung M.K."/>
            <person name="Conn L."/>
            <person name="Conway A.B."/>
            <person name="Conway A.R."/>
            <person name="Creasy T.H."/>
            <person name="Dewar K."/>
            <person name="Dunn P."/>
            <person name="Etgu P."/>
            <person name="Feldblyum T.V."/>
            <person name="Feng J.-D."/>
            <person name="Fong B."/>
            <person name="Fujii C.Y."/>
            <person name="Gill J.E."/>
            <person name="Goldsmith A.D."/>
            <person name="Haas B."/>
            <person name="Hansen N.F."/>
            <person name="Hughes B."/>
            <person name="Huizar L."/>
            <person name="Hunter J.L."/>
            <person name="Jenkins J."/>
            <person name="Johnson-Hopson C."/>
            <person name="Khan S."/>
            <person name="Khaykin E."/>
            <person name="Kim C.J."/>
            <person name="Koo H.L."/>
            <person name="Kremenetskaia I."/>
            <person name="Kurtz D.B."/>
            <person name="Kwan A."/>
            <person name="Lam B."/>
            <person name="Langin-Hooper S."/>
            <person name="Lee A."/>
            <person name="Lee J.M."/>
            <person name="Lenz C.A."/>
            <person name="Li J.H."/>
            <person name="Li Y.-P."/>
            <person name="Lin X."/>
            <person name="Liu S.X."/>
            <person name="Liu Z.A."/>
            <person name="Luros J.S."/>
            <person name="Maiti R."/>
            <person name="Marziali A."/>
            <person name="Militscher J."/>
            <person name="Miranda M."/>
            <person name="Nguyen M."/>
            <person name="Nierman W.C."/>
            <person name="Osborne B.I."/>
            <person name="Pai G."/>
            <person name="Peterson J."/>
            <person name="Pham P.K."/>
            <person name="Rizzo M."/>
            <person name="Rooney T."/>
            <person name="Rowley D."/>
            <person name="Sakano H."/>
            <person name="Salzberg S.L."/>
            <person name="Schwartz J.R."/>
            <person name="Shinn P."/>
            <person name="Southwick A.M."/>
            <person name="Sun H."/>
            <person name="Tallon L.J."/>
            <person name="Tambunga G."/>
            <person name="Toriumi M.J."/>
            <person name="Town C.D."/>
            <person name="Utterback T."/>
            <person name="Van Aken S."/>
            <person name="Vaysberg M."/>
            <person name="Vysotskaia V.S."/>
            <person name="Walker M."/>
            <person name="Wu D."/>
            <person name="Yu G."/>
            <person name="Fraser C.M."/>
            <person name="Venter J.C."/>
            <person name="Davis R.W."/>
        </authorList>
    </citation>
    <scope>NUCLEOTIDE SEQUENCE [LARGE SCALE GENOMIC DNA]</scope>
    <source>
        <strain>cv. Columbia</strain>
    </source>
</reference>
<reference key="2">
    <citation type="journal article" date="2017" name="Plant J.">
        <title>Araport11: a complete reannotation of the Arabidopsis thaliana reference genome.</title>
        <authorList>
            <person name="Cheng C.Y."/>
            <person name="Krishnakumar V."/>
            <person name="Chan A.P."/>
            <person name="Thibaud-Nissen F."/>
            <person name="Schobel S."/>
            <person name="Town C.D."/>
        </authorList>
    </citation>
    <scope>GENOME REANNOTATION</scope>
    <source>
        <strain>cv. Columbia</strain>
    </source>
</reference>
<reference key="3">
    <citation type="journal article" date="2003" name="Science">
        <title>Empirical analysis of transcriptional activity in the Arabidopsis genome.</title>
        <authorList>
            <person name="Yamada K."/>
            <person name="Lim J."/>
            <person name="Dale J.M."/>
            <person name="Chen H."/>
            <person name="Shinn P."/>
            <person name="Palm C.J."/>
            <person name="Southwick A.M."/>
            <person name="Wu H.C."/>
            <person name="Kim C.J."/>
            <person name="Nguyen M."/>
            <person name="Pham P.K."/>
            <person name="Cheuk R.F."/>
            <person name="Karlin-Newmann G."/>
            <person name="Liu S.X."/>
            <person name="Lam B."/>
            <person name="Sakano H."/>
            <person name="Wu T."/>
            <person name="Yu G."/>
            <person name="Miranda M."/>
            <person name="Quach H.L."/>
            <person name="Tripp M."/>
            <person name="Chang C.H."/>
            <person name="Lee J.M."/>
            <person name="Toriumi M.J."/>
            <person name="Chan M.M."/>
            <person name="Tang C.C."/>
            <person name="Onodera C.S."/>
            <person name="Deng J.M."/>
            <person name="Akiyama K."/>
            <person name="Ansari Y."/>
            <person name="Arakawa T."/>
            <person name="Banh J."/>
            <person name="Banno F."/>
            <person name="Bowser L."/>
            <person name="Brooks S.Y."/>
            <person name="Carninci P."/>
            <person name="Chao Q."/>
            <person name="Choy N."/>
            <person name="Enju A."/>
            <person name="Goldsmith A.D."/>
            <person name="Gurjal M."/>
            <person name="Hansen N.F."/>
            <person name="Hayashizaki Y."/>
            <person name="Johnson-Hopson C."/>
            <person name="Hsuan V.W."/>
            <person name="Iida K."/>
            <person name="Karnes M."/>
            <person name="Khan S."/>
            <person name="Koesema E."/>
            <person name="Ishida J."/>
            <person name="Jiang P.X."/>
            <person name="Jones T."/>
            <person name="Kawai J."/>
            <person name="Kamiya A."/>
            <person name="Meyers C."/>
            <person name="Nakajima M."/>
            <person name="Narusaka M."/>
            <person name="Seki M."/>
            <person name="Sakurai T."/>
            <person name="Satou M."/>
            <person name="Tamse R."/>
            <person name="Vaysberg M."/>
            <person name="Wallender E.K."/>
            <person name="Wong C."/>
            <person name="Yamamura Y."/>
            <person name="Yuan S."/>
            <person name="Shinozaki K."/>
            <person name="Davis R.W."/>
            <person name="Theologis A."/>
            <person name="Ecker J.R."/>
        </authorList>
    </citation>
    <scope>NUCLEOTIDE SEQUENCE [LARGE SCALE MRNA]</scope>
    <source>
        <strain>cv. Columbia</strain>
    </source>
</reference>
<reference key="4">
    <citation type="journal article" date="2010" name="PLoS ONE">
        <title>NOF1 encodes an Arabidopsis protein involved in the control of rRNA expression.</title>
        <authorList>
            <person name="Harscoet E."/>
            <person name="Dubreucq B."/>
            <person name="Palauqui J.-C."/>
            <person name="Lepiniec L."/>
        </authorList>
    </citation>
    <scope>FUNCTION</scope>
    <scope>DISRUPTION PHENOTYPE</scope>
    <scope>TISSUE SPECIFICITY</scope>
    <scope>SUBCELLULAR LOCATION</scope>
    <source>
        <strain>cv. Wassilewskija</strain>
    </source>
</reference>
<reference key="5">
    <citation type="journal article" date="2016" name="PLoS Genet.">
        <title>Dual role of a SAS10/C1D family protein in ribosomal RNA gene expression and processing is essential for reproduction in Arabidopsis thaliana.</title>
        <authorList>
            <person name="Chen Y.-J.C."/>
            <person name="Wang H.-J."/>
            <person name="Jauh G.-Y."/>
        </authorList>
    </citation>
    <scope>SUBCELLULAR LOCATION</scope>
    <scope>INTERACTION WITH THAL</scope>
    <source>
        <strain>cv. Columbia</strain>
    </source>
</reference>
<accession>Q8H1E7</accession>
<accession>Q93ZS0</accession>
<accession>Q9FZ64</accession>
<name>NOF1_ARATH</name>
<keyword id="KW-0539">Nucleus</keyword>
<keyword id="KW-1185">Reference proteome</keyword>
<keyword id="KW-0687">Ribonucleoprotein</keyword>
<keyword id="KW-0690">Ribosome biogenesis</keyword>
<keyword id="KW-0698">rRNA processing</keyword>
<proteinExistence type="evidence at protein level"/>
<dbReference type="EMBL" id="AC034257">
    <property type="protein sequence ID" value="AAF99813.1"/>
    <property type="status" value="ALT_SEQ"/>
    <property type="molecule type" value="Genomic_DNA"/>
</dbReference>
<dbReference type="EMBL" id="CP002684">
    <property type="protein sequence ID" value="AEE29622.1"/>
    <property type="molecule type" value="Genomic_DNA"/>
</dbReference>
<dbReference type="EMBL" id="AY056300">
    <property type="protein sequence ID" value="AAL07149.1"/>
    <property type="molecule type" value="mRNA"/>
</dbReference>
<dbReference type="EMBL" id="AY150441">
    <property type="protein sequence ID" value="AAN12983.1"/>
    <property type="molecule type" value="mRNA"/>
</dbReference>
<dbReference type="PIR" id="G86311">
    <property type="entry name" value="G86311"/>
</dbReference>
<dbReference type="RefSeq" id="NP_564032.1">
    <property type="nucleotide sequence ID" value="NM_101631.2"/>
</dbReference>
<dbReference type="FunCoup" id="Q8H1E7">
    <property type="interactions" value="4484"/>
</dbReference>
<dbReference type="IntAct" id="Q8H1E7">
    <property type="interactions" value="1"/>
</dbReference>
<dbReference type="STRING" id="3702.Q8H1E7"/>
<dbReference type="iPTMnet" id="Q8H1E7"/>
<dbReference type="PaxDb" id="3702-AT1G17690.1"/>
<dbReference type="ProteomicsDB" id="193307"/>
<dbReference type="EnsemblPlants" id="AT1G17690.1">
    <property type="protein sequence ID" value="AT1G17690.1"/>
    <property type="gene ID" value="AT1G17690"/>
</dbReference>
<dbReference type="GeneID" id="838345"/>
<dbReference type="Gramene" id="AT1G17690.1">
    <property type="protein sequence ID" value="AT1G17690.1"/>
    <property type="gene ID" value="AT1G17690"/>
</dbReference>
<dbReference type="KEGG" id="ath:AT1G17690"/>
<dbReference type="Araport" id="AT1G17690"/>
<dbReference type="TAIR" id="AT1G17690">
    <property type="gene designation" value="NOF1"/>
</dbReference>
<dbReference type="eggNOG" id="KOG2340">
    <property type="taxonomic scope" value="Eukaryota"/>
</dbReference>
<dbReference type="HOGENOM" id="CLU_018705_2_1_1"/>
<dbReference type="InParanoid" id="Q8H1E7"/>
<dbReference type="OMA" id="QDRGDTF"/>
<dbReference type="OrthoDB" id="10264378at2759"/>
<dbReference type="PhylomeDB" id="Q8H1E7"/>
<dbReference type="CD-CODE" id="4299E36E">
    <property type="entry name" value="Nucleolus"/>
</dbReference>
<dbReference type="PRO" id="PR:Q8H1E7"/>
<dbReference type="Proteomes" id="UP000006548">
    <property type="component" value="Chromosome 1"/>
</dbReference>
<dbReference type="ExpressionAtlas" id="Q8H1E7">
    <property type="expression patterns" value="baseline and differential"/>
</dbReference>
<dbReference type="GO" id="GO:0005730">
    <property type="term" value="C:nucleolus"/>
    <property type="evidence" value="ECO:0000314"/>
    <property type="project" value="UniProtKB"/>
</dbReference>
<dbReference type="GO" id="GO:1990904">
    <property type="term" value="C:ribonucleoprotein complex"/>
    <property type="evidence" value="ECO:0007669"/>
    <property type="project" value="UniProtKB-KW"/>
</dbReference>
<dbReference type="GO" id="GO:0034511">
    <property type="term" value="F:U3 snoRNA binding"/>
    <property type="evidence" value="ECO:0007669"/>
    <property type="project" value="InterPro"/>
</dbReference>
<dbReference type="GO" id="GO:0009793">
    <property type="term" value="P:embryo development ending in seed dormancy"/>
    <property type="evidence" value="ECO:0000315"/>
    <property type="project" value="TAIR"/>
</dbReference>
<dbReference type="GO" id="GO:0009553">
    <property type="term" value="P:embryo sac development"/>
    <property type="evidence" value="ECO:0000315"/>
    <property type="project" value="TAIR"/>
</dbReference>
<dbReference type="GO" id="GO:0006364">
    <property type="term" value="P:rRNA processing"/>
    <property type="evidence" value="ECO:0007669"/>
    <property type="project" value="UniProtKB-KW"/>
</dbReference>
<dbReference type="GO" id="GO:0009303">
    <property type="term" value="P:rRNA transcription"/>
    <property type="evidence" value="ECO:0000315"/>
    <property type="project" value="TAIR"/>
</dbReference>
<dbReference type="Gene3D" id="3.40.50.300">
    <property type="entry name" value="P-loop containing nucleotide triphosphate hydrolases"/>
    <property type="match status" value="1"/>
</dbReference>
<dbReference type="InterPro" id="IPR027417">
    <property type="entry name" value="P-loop_NTPase"/>
</dbReference>
<dbReference type="InterPro" id="IPR010678">
    <property type="entry name" value="UTP25"/>
</dbReference>
<dbReference type="InterPro" id="IPR053939">
    <property type="entry name" value="UTP25_C"/>
</dbReference>
<dbReference type="InterPro" id="IPR053940">
    <property type="entry name" value="UTP25_NTPase-like"/>
</dbReference>
<dbReference type="PANTHER" id="PTHR12933">
    <property type="entry name" value="ORF PROTEIN-RELATED"/>
    <property type="match status" value="1"/>
</dbReference>
<dbReference type="PANTHER" id="PTHR12933:SF0">
    <property type="entry name" value="U3 SMALL NUCLEOLAR RNA-ASSOCIATED PROTEIN 25 HOMOLOG"/>
    <property type="match status" value="1"/>
</dbReference>
<dbReference type="Pfam" id="PF06862">
    <property type="entry name" value="Utp25_C"/>
    <property type="match status" value="1"/>
</dbReference>
<dbReference type="Pfam" id="PF22916">
    <property type="entry name" value="UTP25_NTPase-like"/>
    <property type="match status" value="1"/>
</dbReference>
<dbReference type="SUPFAM" id="SSF52540">
    <property type="entry name" value="P-loop containing nucleoside triphosphate hydrolases"/>
    <property type="match status" value="1"/>
</dbReference>
<comment type="function">
    <text evidence="1 3">DEAD-box RNA helicase-like protein required for pre-18S rRNA processing, specifically at sites A0, A1, and A2 (By similarity). Involved in the control of rRNA expression (PubMed:20877469). Required for embryo development and female gametogenesis (PubMed:20877469).</text>
</comment>
<comment type="subunit">
    <text evidence="1 4">Component of the ribosomal small subunit (SSU) processome composed of at least 40 protein subunits and snoRNA U3 (By similarity). Interacts with THAL in the nucleus (PubMed:27792779).</text>
</comment>
<comment type="subcellular location">
    <subcellularLocation>
        <location evidence="3 4">Nucleus</location>
        <location evidence="3 4">Nucleolus</location>
    </subcellularLocation>
</comment>
<comment type="tissue specificity">
    <text evidence="3">Preferentially expressed in differentiating cells in young tissues such as floral buds, ovules, embryos, secondary roots, pollen, young seedlings and vascular bundles (PubMed:20877469). Observed ubiquitously (PubMed:20877469).</text>
</comment>
<comment type="disruption phenotype">
    <text evidence="3">Abnormal female gametogenesis and altered embryo development with a disturbed cellular division pattern (PubMed:20877469). Increased rRNA expression and hypomethylation of rRNA promoters (PubMed:20877469).</text>
</comment>
<comment type="similarity">
    <text evidence="6">Belongs to the UTP25 family.</text>
</comment>
<comment type="sequence caution" evidence="6">
    <conflict type="erroneous gene model prediction">
        <sequence resource="EMBL-CDS" id="AAF99813"/>
    </conflict>
</comment>
<gene>
    <name evidence="5" type="primary">NOF1</name>
    <name evidence="8" type="ordered locus">At1g17690</name>
    <name evidence="7" type="ORF">F11A6.3</name>
</gene>